<keyword id="KW-0028">Amino-acid biosynthesis</keyword>
<keyword id="KW-0057">Aromatic amino acid biosynthesis</keyword>
<keyword id="KW-0521">NADP</keyword>
<keyword id="KW-0560">Oxidoreductase</keyword>
<keyword id="KW-1185">Reference proteome</keyword>
<proteinExistence type="inferred from homology"/>
<gene>
    <name evidence="1" type="primary">aroE</name>
    <name type="ordered locus">CHY_0623</name>
</gene>
<feature type="chain" id="PRO_0000325111" description="Shikimate dehydrogenase (NADP(+))">
    <location>
        <begin position="1"/>
        <end position="280"/>
    </location>
</feature>
<feature type="active site" description="Proton acceptor" evidence="1">
    <location>
        <position position="71"/>
    </location>
</feature>
<feature type="binding site" evidence="1">
    <location>
        <begin position="20"/>
        <end position="22"/>
    </location>
    <ligand>
        <name>shikimate</name>
        <dbReference type="ChEBI" id="CHEBI:36208"/>
    </ligand>
</feature>
<feature type="binding site" evidence="1">
    <location>
        <position position="67"/>
    </location>
    <ligand>
        <name>shikimate</name>
        <dbReference type="ChEBI" id="CHEBI:36208"/>
    </ligand>
</feature>
<feature type="binding site" evidence="1">
    <location>
        <position position="92"/>
    </location>
    <ligand>
        <name>shikimate</name>
        <dbReference type="ChEBI" id="CHEBI:36208"/>
    </ligand>
</feature>
<feature type="binding site" evidence="1">
    <location>
        <position position="107"/>
    </location>
    <ligand>
        <name>shikimate</name>
        <dbReference type="ChEBI" id="CHEBI:36208"/>
    </ligand>
</feature>
<feature type="binding site" evidence="1">
    <location>
        <begin position="131"/>
        <end position="135"/>
    </location>
    <ligand>
        <name>NADP(+)</name>
        <dbReference type="ChEBI" id="CHEBI:58349"/>
    </ligand>
</feature>
<feature type="binding site" evidence="1">
    <location>
        <begin position="154"/>
        <end position="159"/>
    </location>
    <ligand>
        <name>NADP(+)</name>
        <dbReference type="ChEBI" id="CHEBI:58349"/>
    </ligand>
</feature>
<feature type="binding site" evidence="1">
    <location>
        <position position="224"/>
    </location>
    <ligand>
        <name>NADP(+)</name>
        <dbReference type="ChEBI" id="CHEBI:58349"/>
    </ligand>
</feature>
<feature type="binding site" evidence="1">
    <location>
        <position position="226"/>
    </location>
    <ligand>
        <name>shikimate</name>
        <dbReference type="ChEBI" id="CHEBI:36208"/>
    </ligand>
</feature>
<feature type="binding site" evidence="1">
    <location>
        <position position="247"/>
    </location>
    <ligand>
        <name>NADP(+)</name>
        <dbReference type="ChEBI" id="CHEBI:58349"/>
    </ligand>
</feature>
<evidence type="ECO:0000255" key="1">
    <source>
        <dbReference type="HAMAP-Rule" id="MF_00222"/>
    </source>
</evidence>
<accession>Q3AEF5</accession>
<dbReference type="EC" id="1.1.1.25" evidence="1"/>
<dbReference type="EMBL" id="CP000141">
    <property type="protein sequence ID" value="ABB14147.1"/>
    <property type="molecule type" value="Genomic_DNA"/>
</dbReference>
<dbReference type="SMR" id="Q3AEF5"/>
<dbReference type="FunCoup" id="Q3AEF5">
    <property type="interactions" value="426"/>
</dbReference>
<dbReference type="STRING" id="246194.CHY_0623"/>
<dbReference type="KEGG" id="chy:CHY_0623"/>
<dbReference type="eggNOG" id="COG0169">
    <property type="taxonomic scope" value="Bacteria"/>
</dbReference>
<dbReference type="HOGENOM" id="CLU_044063_4_1_9"/>
<dbReference type="InParanoid" id="Q3AEF5"/>
<dbReference type="UniPathway" id="UPA00053">
    <property type="reaction ID" value="UER00087"/>
</dbReference>
<dbReference type="Proteomes" id="UP000002706">
    <property type="component" value="Chromosome"/>
</dbReference>
<dbReference type="GO" id="GO:0050661">
    <property type="term" value="F:NADP binding"/>
    <property type="evidence" value="ECO:0007669"/>
    <property type="project" value="InterPro"/>
</dbReference>
<dbReference type="GO" id="GO:0004764">
    <property type="term" value="F:shikimate 3-dehydrogenase (NADP+) activity"/>
    <property type="evidence" value="ECO:0007669"/>
    <property type="project" value="UniProtKB-UniRule"/>
</dbReference>
<dbReference type="GO" id="GO:0008652">
    <property type="term" value="P:amino acid biosynthetic process"/>
    <property type="evidence" value="ECO:0007669"/>
    <property type="project" value="UniProtKB-KW"/>
</dbReference>
<dbReference type="GO" id="GO:0009073">
    <property type="term" value="P:aromatic amino acid family biosynthetic process"/>
    <property type="evidence" value="ECO:0007669"/>
    <property type="project" value="UniProtKB-KW"/>
</dbReference>
<dbReference type="GO" id="GO:0009423">
    <property type="term" value="P:chorismate biosynthetic process"/>
    <property type="evidence" value="ECO:0007669"/>
    <property type="project" value="UniProtKB-UniRule"/>
</dbReference>
<dbReference type="GO" id="GO:0019632">
    <property type="term" value="P:shikimate metabolic process"/>
    <property type="evidence" value="ECO:0007669"/>
    <property type="project" value="InterPro"/>
</dbReference>
<dbReference type="CDD" id="cd01065">
    <property type="entry name" value="NAD_bind_Shikimate_DH"/>
    <property type="match status" value="1"/>
</dbReference>
<dbReference type="FunFam" id="3.40.50.10860:FF:000004">
    <property type="entry name" value="Quinate/shikimate dehydrogenase"/>
    <property type="match status" value="1"/>
</dbReference>
<dbReference type="Gene3D" id="3.40.50.10860">
    <property type="entry name" value="Leucine Dehydrogenase, chain A, domain 1"/>
    <property type="match status" value="1"/>
</dbReference>
<dbReference type="Gene3D" id="3.40.50.720">
    <property type="entry name" value="NAD(P)-binding Rossmann-like Domain"/>
    <property type="match status" value="1"/>
</dbReference>
<dbReference type="HAMAP" id="MF_00222">
    <property type="entry name" value="Shikimate_DH_AroE"/>
    <property type="match status" value="1"/>
</dbReference>
<dbReference type="InterPro" id="IPR046346">
    <property type="entry name" value="Aminoacid_DH-like_N_sf"/>
</dbReference>
<dbReference type="InterPro" id="IPR036291">
    <property type="entry name" value="NAD(P)-bd_dom_sf"/>
</dbReference>
<dbReference type="InterPro" id="IPR041121">
    <property type="entry name" value="SDH_C"/>
</dbReference>
<dbReference type="InterPro" id="IPR011342">
    <property type="entry name" value="Shikimate_DH"/>
</dbReference>
<dbReference type="InterPro" id="IPR013708">
    <property type="entry name" value="Shikimate_DH-bd_N"/>
</dbReference>
<dbReference type="InterPro" id="IPR022893">
    <property type="entry name" value="Shikimate_DH_fam"/>
</dbReference>
<dbReference type="InterPro" id="IPR006151">
    <property type="entry name" value="Shikm_DH/Glu-tRNA_Rdtase"/>
</dbReference>
<dbReference type="NCBIfam" id="TIGR00507">
    <property type="entry name" value="aroE"/>
    <property type="match status" value="1"/>
</dbReference>
<dbReference type="NCBIfam" id="NF001314">
    <property type="entry name" value="PRK00258.2-2"/>
    <property type="match status" value="1"/>
</dbReference>
<dbReference type="NCBIfam" id="NF001319">
    <property type="entry name" value="PRK00258.3-3"/>
    <property type="match status" value="1"/>
</dbReference>
<dbReference type="PANTHER" id="PTHR21089:SF1">
    <property type="entry name" value="BIFUNCTIONAL 3-DEHYDROQUINATE DEHYDRATASE_SHIKIMATE DEHYDROGENASE, CHLOROPLASTIC"/>
    <property type="match status" value="1"/>
</dbReference>
<dbReference type="PANTHER" id="PTHR21089">
    <property type="entry name" value="SHIKIMATE DEHYDROGENASE"/>
    <property type="match status" value="1"/>
</dbReference>
<dbReference type="Pfam" id="PF18317">
    <property type="entry name" value="SDH_C"/>
    <property type="match status" value="1"/>
</dbReference>
<dbReference type="Pfam" id="PF01488">
    <property type="entry name" value="Shikimate_DH"/>
    <property type="match status" value="1"/>
</dbReference>
<dbReference type="Pfam" id="PF08501">
    <property type="entry name" value="Shikimate_dh_N"/>
    <property type="match status" value="1"/>
</dbReference>
<dbReference type="SUPFAM" id="SSF53223">
    <property type="entry name" value="Aminoacid dehydrogenase-like, N-terminal domain"/>
    <property type="match status" value="1"/>
</dbReference>
<dbReference type="SUPFAM" id="SSF51735">
    <property type="entry name" value="NAD(P)-binding Rossmann-fold domains"/>
    <property type="match status" value="1"/>
</dbReference>
<comment type="function">
    <text evidence="1">Involved in the biosynthesis of the chorismate, which leads to the biosynthesis of aromatic amino acids. Catalyzes the reversible NADPH linked reduction of 3-dehydroshikimate (DHSA) to yield shikimate (SA).</text>
</comment>
<comment type="catalytic activity">
    <reaction evidence="1">
        <text>shikimate + NADP(+) = 3-dehydroshikimate + NADPH + H(+)</text>
        <dbReference type="Rhea" id="RHEA:17737"/>
        <dbReference type="ChEBI" id="CHEBI:15378"/>
        <dbReference type="ChEBI" id="CHEBI:16630"/>
        <dbReference type="ChEBI" id="CHEBI:36208"/>
        <dbReference type="ChEBI" id="CHEBI:57783"/>
        <dbReference type="ChEBI" id="CHEBI:58349"/>
        <dbReference type="EC" id="1.1.1.25"/>
    </reaction>
</comment>
<comment type="pathway">
    <text evidence="1">Metabolic intermediate biosynthesis; chorismate biosynthesis; chorismate from D-erythrose 4-phosphate and phosphoenolpyruvate: step 4/7.</text>
</comment>
<comment type="subunit">
    <text evidence="1">Homodimer.</text>
</comment>
<comment type="similarity">
    <text evidence="1">Belongs to the shikimate dehydrogenase family.</text>
</comment>
<protein>
    <recommendedName>
        <fullName evidence="1">Shikimate dehydrogenase (NADP(+))</fullName>
        <shortName evidence="1">SDH</shortName>
        <ecNumber evidence="1">1.1.1.25</ecNumber>
    </recommendedName>
</protein>
<organism>
    <name type="scientific">Carboxydothermus hydrogenoformans (strain ATCC BAA-161 / DSM 6008 / Z-2901)</name>
    <dbReference type="NCBI Taxonomy" id="246194"/>
    <lineage>
        <taxon>Bacteria</taxon>
        <taxon>Bacillati</taxon>
        <taxon>Bacillota</taxon>
        <taxon>Clostridia</taxon>
        <taxon>Thermoanaerobacterales</taxon>
        <taxon>Thermoanaerobacteraceae</taxon>
        <taxon>Carboxydothermus</taxon>
    </lineage>
</organism>
<name>AROE_CARHZ</name>
<sequence>MRINGETKLTGIIGYPLKHTLSPQMHNEAFKALNLNFLYLPLEVAEESLPQAIYGLKAFNFRGINVTIPYKEKVFPFLDEVATEAKTIGAVNTIVHDRGRLIGYNTDAPGFLLSLKENDVEVTGKKVLLLGAGGAARAVAYALLTAGAELIIANRTIDKAKELAKDFQGVGKISEILELGDKPISLAPYHMAVNTLPLGMHPYENQMPAVDFTGVTSDFVAYDLIYNPAETKFLKASKEKGARTINGLSMLLWQGVLAFEKWTGVSPPVKVMKKAIGLSC</sequence>
<reference key="1">
    <citation type="journal article" date="2005" name="PLoS Genet.">
        <title>Life in hot carbon monoxide: the complete genome sequence of Carboxydothermus hydrogenoformans Z-2901.</title>
        <authorList>
            <person name="Wu M."/>
            <person name="Ren Q."/>
            <person name="Durkin A.S."/>
            <person name="Daugherty S.C."/>
            <person name="Brinkac L.M."/>
            <person name="Dodson R.J."/>
            <person name="Madupu R."/>
            <person name="Sullivan S.A."/>
            <person name="Kolonay J.F."/>
            <person name="Nelson W.C."/>
            <person name="Tallon L.J."/>
            <person name="Jones K.M."/>
            <person name="Ulrich L.E."/>
            <person name="Gonzalez J.M."/>
            <person name="Zhulin I.B."/>
            <person name="Robb F.T."/>
            <person name="Eisen J.A."/>
        </authorList>
    </citation>
    <scope>NUCLEOTIDE SEQUENCE [LARGE SCALE GENOMIC DNA]</scope>
    <source>
        <strain>ATCC BAA-161 / DSM 6008 / Z-2901</strain>
    </source>
</reference>